<dbReference type="EMBL" id="AY548484">
    <property type="protein sequence ID" value="AAT09677.1"/>
    <property type="molecule type" value="Genomic_DNA"/>
</dbReference>
<dbReference type="RefSeq" id="YP_031596.1">
    <property type="nucleotide sequence ID" value="NC_005946.1"/>
</dbReference>
<dbReference type="KEGG" id="vg:2947738"/>
<dbReference type="Proteomes" id="UP000008770">
    <property type="component" value="Segment"/>
</dbReference>
<gene>
    <name type="ORF">FV3-018L</name>
</gene>
<keyword id="KW-1185">Reference proteome</keyword>
<keyword id="KW-0732">Signal</keyword>
<name>018L_FRG3G</name>
<protein>
    <recommendedName>
        <fullName>Uncharacterized protein 018L</fullName>
    </recommendedName>
</protein>
<organismHost>
    <name type="scientific">Dryophytes versicolor</name>
    <name type="common">chameleon treefrog</name>
    <dbReference type="NCBI Taxonomy" id="30343"/>
</organismHost>
<organismHost>
    <name type="scientific">Lithobates pipiens</name>
    <name type="common">Northern leopard frog</name>
    <name type="synonym">Rana pipiens</name>
    <dbReference type="NCBI Taxonomy" id="8404"/>
</organismHost>
<organismHost>
    <name type="scientific">Lithobates sylvaticus</name>
    <name type="common">Wood frog</name>
    <name type="synonym">Rana sylvatica</name>
    <dbReference type="NCBI Taxonomy" id="45438"/>
</organismHost>
<organismHost>
    <name type="scientific">Notophthalmus viridescens</name>
    <name type="common">Eastern newt</name>
    <name type="synonym">Triturus viridescens</name>
    <dbReference type="NCBI Taxonomy" id="8316"/>
</organismHost>
<organism>
    <name type="scientific">Frog virus 3 (isolate Goorha)</name>
    <name type="common">FV-3</name>
    <dbReference type="NCBI Taxonomy" id="654924"/>
    <lineage>
        <taxon>Viruses</taxon>
        <taxon>Varidnaviria</taxon>
        <taxon>Bamfordvirae</taxon>
        <taxon>Nucleocytoviricota</taxon>
        <taxon>Megaviricetes</taxon>
        <taxon>Pimascovirales</taxon>
        <taxon>Iridoviridae</taxon>
        <taxon>Alphairidovirinae</taxon>
        <taxon>Ranavirus</taxon>
        <taxon>Frog virus 3</taxon>
    </lineage>
</organism>
<reference key="1">
    <citation type="journal article" date="2004" name="Virology">
        <title>Comparative genomic analyses of frog virus 3, type species of the genus Ranavirus (family Iridoviridae).</title>
        <authorList>
            <person name="Tan W.G."/>
            <person name="Barkman T.J."/>
            <person name="Gregory Chinchar V."/>
            <person name="Essani K."/>
        </authorList>
    </citation>
    <scope>NUCLEOTIDE SEQUENCE [LARGE SCALE GENOMIC DNA]</scope>
</reference>
<accession>Q6GZV7</accession>
<feature type="signal peptide" evidence="1">
    <location>
        <begin position="1"/>
        <end position="27"/>
    </location>
</feature>
<feature type="chain" id="PRO_0000410548" description="Uncharacterized protein 018L">
    <location>
        <begin position="28"/>
        <end position="78"/>
    </location>
</feature>
<proteinExistence type="inferred from homology"/>
<sequence length="78" mass="8280">MQNSKTDMCAALWAVTGLVLNVAVRFALEPFKESMGQGWHTAARVAVNGAIVLALADRLSDSPVTMTLFVMALSASPE</sequence>
<evidence type="ECO:0000255" key="1"/>